<protein>
    <recommendedName>
        <fullName>Cytokine response-modifying protein B</fullName>
        <shortName>CrmB</shortName>
    </recommendedName>
    <alternativeName>
        <fullName>Viral tumor necrosis factor receptor II</fullName>
        <shortName>vTNFR</shortName>
    </alternativeName>
</protein>
<reference key="1">
    <citation type="journal article" date="1993" name="FEBS Lett.">
        <title>Genes of variola and vaccinia viruses necessary to overcome the host protective mechanisms.</title>
        <authorList>
            <person name="Shchelkunov S.N."/>
            <person name="Blinov V.M."/>
            <person name="Sandakhchiev L.S."/>
        </authorList>
    </citation>
    <scope>NUCLEOTIDE SEQUENCE [GENOMIC DNA]</scope>
</reference>
<reference key="2">
    <citation type="journal article" date="2006" name="Proc. Natl. Acad. Sci. U.S.A.">
        <title>A chemokine-binding domain in the tumor necrosis factor receptor from variola (smallpox) virus.</title>
        <authorList>
            <person name="Alejo A."/>
            <person name="Ruiz-Arguello M.B."/>
            <person name="Ho Y."/>
            <person name="Smith V.P."/>
            <person name="Saraiva M."/>
            <person name="Alcami A."/>
        </authorList>
    </citation>
    <scope>FUNCTION</scope>
    <scope>INTERACTION WITH HOST TNF; LTA; CCL28; CCL25; CXCL12; CXCL13 AND CXCL14</scope>
</reference>
<reference key="3">
    <citation type="journal article" date="2006" name="Biochim. Biophys. Acta">
        <title>Properties of the recombinant TNF-binding proteins from variola, monkeypox, and cowpox viruses are different.</title>
        <authorList>
            <person name="Gileva I.P."/>
            <person name="Nepomnyashchikh T.S."/>
            <person name="Antonets D.V."/>
            <person name="Lebedev L.R."/>
            <person name="Kochneva G.V."/>
            <person name="Grazhdantseva A.V."/>
            <person name="Shchelkunov S.N."/>
        </authorList>
    </citation>
    <scope>FUNCTION</scope>
</reference>
<reference key="4">
    <citation type="journal article" date="2009" name="Biochemistry (Mosc.)">
        <title>Recombinant TNF-binding protein from variola virus as a novel potential TNF antagonist.</title>
        <authorList>
            <person name="Gileva I.P."/>
            <person name="Nepomnyashchikh T.S."/>
            <person name="Ryazankin I.A."/>
            <person name="Shchelkunov S.N."/>
        </authorList>
    </citation>
    <scope>SUBUNIT</scope>
</reference>
<reference key="5">
    <citation type="journal article" date="2010" name="BMC Res. Notes">
        <title>SECRET domain of variola virus CrmB protein can be a member of poxviral type II chemokine-binding proteins family.</title>
        <authorList>
            <person name="Antonets D.V."/>
            <person name="Nepomnyashchikh T.S."/>
            <person name="Shchelkunov S.N."/>
        </authorList>
    </citation>
    <scope>DOMAIN</scope>
</reference>
<gene>
    <name type="primary">OPG002</name>
    <name type="ORF">G2R</name>
    <name type="ORF">G4R</name>
</gene>
<proteinExistence type="evidence at protein level"/>
<accession>P0DSV7</accession>
<accession>P34015</accession>
<accession>Q85407</accession>
<accession>Q89098</accession>
<accession>Q89118</accession>
<sequence>MKSVLYLYILFLSCIIINGRDAAPYTPPNGKCKDTEYKRHNLCCLSCPPGTYASRLCDSKTNTQCTPCGSGTFTSRNNHLPACLSCNGRCNSNQVETRSCNTTHNRICECSPGYYCLLKGSSGCKACVSQTKCGIGYGVSGHTSVGDVICSPCGFGTYSHTVSSADKCEPVPNNTFNYIDVEITLYPVNDTSCTRTTTTGLSESILTSELTITMNHTDCNPVFREEYFSVLNKVATSGFFTGENRYQNISKVCTLNFEIKCNNKGSSFKQLTKAKNDDGMMSHSETVTLAGDCLSSVDIYILYSNTNAQDYETDTISYRVGNVLDDDSHMPGSCNIHKPITNSKPTRFL</sequence>
<feature type="signal peptide" evidence="3">
    <location>
        <begin position="1"/>
        <end position="22"/>
    </location>
</feature>
<feature type="chain" id="PRO_0000034615" description="Cytokine response-modifying protein B">
    <location>
        <begin position="23"/>
        <end position="349"/>
    </location>
</feature>
<feature type="repeat" description="TNFR-Cys 1">
    <location>
        <begin position="31"/>
        <end position="66"/>
    </location>
</feature>
<feature type="repeat" description="TNFR-Cys 2">
    <location>
        <begin position="67"/>
        <end position="108"/>
    </location>
</feature>
<feature type="region of interest" description="TNF-binding">
    <location>
        <begin position="1"/>
        <end position="160"/>
    </location>
</feature>
<feature type="region of interest" description="Chemokine-binding">
    <location>
        <begin position="161"/>
        <end position="349"/>
    </location>
</feature>
<feature type="glycosylation site" description="N-linked (GlcNAc...) asparagine; by host" evidence="3">
    <location>
        <position position="101"/>
    </location>
</feature>
<feature type="glycosylation site" description="N-linked (GlcNAc...) asparagine; by host" evidence="3">
    <location>
        <position position="173"/>
    </location>
</feature>
<feature type="glycosylation site" description="N-linked (GlcNAc...) asparagine; by host" evidence="3">
    <location>
        <position position="189"/>
    </location>
</feature>
<feature type="glycosylation site" description="N-linked (GlcNAc...) asparagine; by host" evidence="3">
    <location>
        <position position="215"/>
    </location>
</feature>
<feature type="glycosylation site" description="N-linked (GlcNAc...) asparagine; by host" evidence="3">
    <location>
        <position position="248"/>
    </location>
</feature>
<feature type="disulfide bond" evidence="4">
    <location>
        <begin position="32"/>
        <end position="43"/>
    </location>
</feature>
<feature type="disulfide bond" evidence="4">
    <location>
        <begin position="44"/>
        <end position="57"/>
    </location>
</feature>
<feature type="disulfide bond" evidence="4">
    <location>
        <begin position="47"/>
        <end position="65"/>
    </location>
</feature>
<feature type="disulfide bond" evidence="4">
    <location>
        <begin position="68"/>
        <end position="83"/>
    </location>
</feature>
<feature type="disulfide bond" evidence="4">
    <location>
        <begin position="86"/>
        <end position="100"/>
    </location>
</feature>
<feature type="disulfide bond" evidence="4">
    <location>
        <begin position="90"/>
        <end position="108"/>
    </location>
</feature>
<organism>
    <name type="scientific">Variola virus (isolate Human/India/Ind3/1967)</name>
    <name type="common">VARV</name>
    <name type="synonym">Smallpox virus</name>
    <dbReference type="NCBI Taxonomy" id="587200"/>
    <lineage>
        <taxon>Viruses</taxon>
        <taxon>Varidnaviria</taxon>
        <taxon>Bamfordvirae</taxon>
        <taxon>Nucleocytoviricota</taxon>
        <taxon>Pokkesviricetes</taxon>
        <taxon>Chitovirales</taxon>
        <taxon>Poxviridae</taxon>
        <taxon>Chordopoxvirinae</taxon>
        <taxon>Orthopoxvirus</taxon>
        <taxon>Variola virus</taxon>
    </lineage>
</organism>
<keyword id="KW-1015">Disulfide bond</keyword>
<keyword id="KW-0325">Glycoprotein</keyword>
<keyword id="KW-0945">Host-virus interaction</keyword>
<keyword id="KW-1086">Inhibition of host chemokines by virus</keyword>
<keyword id="KW-1185">Reference proteome</keyword>
<keyword id="KW-0677">Repeat</keyword>
<keyword id="KW-0964">Secreted</keyword>
<keyword id="KW-0732">Signal</keyword>
<keyword id="KW-0899">Viral immunoevasion</keyword>
<evidence type="ECO:0000250" key="1">
    <source>
        <dbReference type="UniProtKB" id="O73559"/>
    </source>
</evidence>
<evidence type="ECO:0000250" key="2">
    <source>
        <dbReference type="UniProtKB" id="Q76ZJ3"/>
    </source>
</evidence>
<evidence type="ECO:0000255" key="3"/>
<evidence type="ECO:0000255" key="4">
    <source>
        <dbReference type="PROSITE-ProRule" id="PRU00206"/>
    </source>
</evidence>
<evidence type="ECO:0000269" key="5">
    <source>
    </source>
</evidence>
<evidence type="ECO:0000269" key="6">
    <source>
    </source>
</evidence>
<evidence type="ECO:0000269" key="7">
    <source>
    </source>
</evidence>
<evidence type="ECO:0000269" key="8">
    <source>
    </source>
</evidence>
<evidence type="ECO:0000305" key="9"/>
<dbReference type="EMBL" id="X69198">
    <property type="protein sequence ID" value="CAA49137.1"/>
    <property type="molecule type" value="Genomic_DNA"/>
</dbReference>
<dbReference type="EMBL" id="X67117">
    <property type="protein sequence ID" value="CAA47540.1"/>
    <property type="molecule type" value="Genomic_DNA"/>
</dbReference>
<dbReference type="PIR" id="D36858">
    <property type="entry name" value="D36858"/>
</dbReference>
<dbReference type="RefSeq" id="NP_042240.1">
    <property type="nucleotide sequence ID" value="NC_001611.1"/>
</dbReference>
<dbReference type="SMR" id="P0DSV7"/>
<dbReference type="DIP" id="DIP-61146N"/>
<dbReference type="IntAct" id="P0DSV7">
    <property type="interactions" value="11"/>
</dbReference>
<dbReference type="GlyCosmos" id="P0DSV7">
    <property type="glycosylation" value="5 sites, No reported glycans"/>
</dbReference>
<dbReference type="GeneID" id="1486427"/>
<dbReference type="KEGG" id="vg:1486427"/>
<dbReference type="Proteomes" id="UP000002060">
    <property type="component" value="Segment"/>
</dbReference>
<dbReference type="GO" id="GO:0005615">
    <property type="term" value="C:extracellular space"/>
    <property type="evidence" value="ECO:0000314"/>
    <property type="project" value="UniProt"/>
</dbReference>
<dbReference type="GO" id="GO:0043120">
    <property type="term" value="F:tumor necrosis factor binding"/>
    <property type="evidence" value="ECO:0007669"/>
    <property type="project" value="TreeGrafter"/>
</dbReference>
<dbReference type="GO" id="GO:0005031">
    <property type="term" value="F:tumor necrosis factor receptor activity"/>
    <property type="evidence" value="ECO:0000314"/>
    <property type="project" value="UniProt"/>
</dbReference>
<dbReference type="GO" id="GO:0051044">
    <property type="term" value="P:positive regulation of membrane protein ectodomain proteolysis"/>
    <property type="evidence" value="ECO:0007669"/>
    <property type="project" value="TreeGrafter"/>
</dbReference>
<dbReference type="GO" id="GO:0042129">
    <property type="term" value="P:regulation of T cell proliferation"/>
    <property type="evidence" value="ECO:0007669"/>
    <property type="project" value="TreeGrafter"/>
</dbReference>
<dbReference type="GO" id="GO:0052031">
    <property type="term" value="P:symbiont-mediated perturbation of host defense response"/>
    <property type="evidence" value="ECO:0007669"/>
    <property type="project" value="InterPro"/>
</dbReference>
<dbReference type="CDD" id="cd15839">
    <property type="entry name" value="TNFRSF_viral"/>
    <property type="match status" value="1"/>
</dbReference>
<dbReference type="Gene3D" id="2.60.240.20">
    <property type="match status" value="1"/>
</dbReference>
<dbReference type="Gene3D" id="2.10.50.10">
    <property type="entry name" value="Tumor Necrosis Factor Receptor, subunit A, domain 2"/>
    <property type="match status" value="2"/>
</dbReference>
<dbReference type="InterPro" id="IPR010806">
    <property type="entry name" value="Poxvirus_TNF-rcpt-II_C"/>
</dbReference>
<dbReference type="InterPro" id="IPR011172">
    <property type="entry name" value="Poxvirus_TNF_rcpt-II"/>
</dbReference>
<dbReference type="InterPro" id="IPR051670">
    <property type="entry name" value="TNF_chemokine_rcpt-like"/>
</dbReference>
<dbReference type="InterPro" id="IPR001368">
    <property type="entry name" value="TNFR/NGFR_Cys_rich_reg"/>
</dbReference>
<dbReference type="InterPro" id="IPR034059">
    <property type="entry name" value="TNFRSF_N_viral"/>
</dbReference>
<dbReference type="PANTHER" id="PTHR47386">
    <property type="entry name" value="TUMOR NECROSIS FACTOR RECEPTOR SUPERFAMILY MEMBER 1B"/>
    <property type="match status" value="1"/>
</dbReference>
<dbReference type="PANTHER" id="PTHR47386:SF1">
    <property type="entry name" value="TUMOR NECROSIS FACTOR RECEPTOR SUPERFAMILY MEMBER 1B"/>
    <property type="match status" value="1"/>
</dbReference>
<dbReference type="Pfam" id="PF07190">
    <property type="entry name" value="CrmD_SECRET"/>
    <property type="match status" value="1"/>
</dbReference>
<dbReference type="Pfam" id="PF00020">
    <property type="entry name" value="TNFR_c6"/>
    <property type="match status" value="1"/>
</dbReference>
<dbReference type="PIRSF" id="PIRSF001790">
    <property type="entry name" value="TNF_C22L"/>
    <property type="match status" value="1"/>
</dbReference>
<dbReference type="SMART" id="SM00208">
    <property type="entry name" value="TNFR"/>
    <property type="match status" value="3"/>
</dbReference>
<dbReference type="SUPFAM" id="SSF57586">
    <property type="entry name" value="TNF receptor-like"/>
    <property type="match status" value="2"/>
</dbReference>
<dbReference type="PROSITE" id="PS00652">
    <property type="entry name" value="TNFR_NGFR_1"/>
    <property type="match status" value="2"/>
</dbReference>
<dbReference type="PROSITE" id="PS50050">
    <property type="entry name" value="TNFR_NGFR_2"/>
    <property type="match status" value="2"/>
</dbReference>
<name>CRMB_VAR67</name>
<comment type="function">
    <text evidence="5 6">Inhibits host immune defense by binding to host TNF and various chemokines in the extracellular space (PubMed:16581912, PubMed:17070121). Binds host CC chemokines (beta chemokines) and CXC chemokines (alpha chemokines) (PubMed:16581912).</text>
</comment>
<comment type="subunit">
    <text evidence="5 7">Homodimer (PubMed:19961417). Interacts with host TNF, LTA, CCL28, CCL25, CXCL12, CXCL13 and CXCl14 (PubMed:16581912).</text>
</comment>
<comment type="subcellular location">
    <subcellularLocation>
        <location evidence="1">Secreted</location>
    </subcellularLocation>
</comment>
<comment type="induction">
    <text evidence="2">Expressed in the early phase of the viral replicative cycle.</text>
</comment>
<comment type="domain">
    <text evidence="8">The N-terminal region is similar to host TNF receptor 2/TNFRSF1B and binds host TNF. The C-terminal region is called smallpox virus-encoded chemokine receptor (SECRET), and binds host cytokines (PubMed:20979600).</text>
</comment>
<comment type="similarity">
    <text evidence="9">Belongs to the orthopoxvirus OPG002 family.</text>
</comment>
<organismHost>
    <name type="scientific">Homo sapiens</name>
    <name type="common">Human</name>
    <dbReference type="NCBI Taxonomy" id="9606"/>
</organismHost>